<reference key="1">
    <citation type="submission" date="2007-12" db="EMBL/GenBank/DDBJ databases">
        <title>Brucella suis ATCC 23445 whole genome shotgun sequencing project.</title>
        <authorList>
            <person name="Setubal J.C."/>
            <person name="Bowns C."/>
            <person name="Boyle S."/>
            <person name="Crasta O.R."/>
            <person name="Czar M.J."/>
            <person name="Dharmanolla C."/>
            <person name="Gillespie J.J."/>
            <person name="Kenyon R.W."/>
            <person name="Lu J."/>
            <person name="Mane S."/>
            <person name="Mohapatra S."/>
            <person name="Nagrani S."/>
            <person name="Purkayastha A."/>
            <person name="Rajasimha H.K."/>
            <person name="Shallom J.M."/>
            <person name="Shallom S."/>
            <person name="Shukla M."/>
            <person name="Snyder E.E."/>
            <person name="Sobral B.W."/>
            <person name="Wattam A.R."/>
            <person name="Will R."/>
            <person name="Williams K."/>
            <person name="Yoo H."/>
            <person name="Bruce D."/>
            <person name="Detter C."/>
            <person name="Munk C."/>
            <person name="Brettin T.S."/>
        </authorList>
    </citation>
    <scope>NUCLEOTIDE SEQUENCE [LARGE SCALE GENOMIC DNA]</scope>
    <source>
        <strain>ATCC 23445 / NCTC 10510</strain>
    </source>
</reference>
<keyword id="KW-0687">Ribonucleoprotein</keyword>
<keyword id="KW-0689">Ribosomal protein</keyword>
<dbReference type="EMBL" id="CP000912">
    <property type="protein sequence ID" value="ABY40185.1"/>
    <property type="molecule type" value="Genomic_DNA"/>
</dbReference>
<dbReference type="RefSeq" id="WP_002964856.1">
    <property type="nucleotide sequence ID" value="NC_010167.1"/>
</dbReference>
<dbReference type="SMR" id="A9WWP9"/>
<dbReference type="GeneID" id="97533091"/>
<dbReference type="KEGG" id="bmt:BSUIS_B1251"/>
<dbReference type="HOGENOM" id="CLU_129084_2_2_5"/>
<dbReference type="Proteomes" id="UP000008545">
    <property type="component" value="Chromosome II"/>
</dbReference>
<dbReference type="GO" id="GO:0015934">
    <property type="term" value="C:large ribosomal subunit"/>
    <property type="evidence" value="ECO:0007669"/>
    <property type="project" value="InterPro"/>
</dbReference>
<dbReference type="GO" id="GO:0003735">
    <property type="term" value="F:structural constituent of ribosome"/>
    <property type="evidence" value="ECO:0007669"/>
    <property type="project" value="InterPro"/>
</dbReference>
<dbReference type="GO" id="GO:0006412">
    <property type="term" value="P:translation"/>
    <property type="evidence" value="ECO:0007669"/>
    <property type="project" value="UniProtKB-UniRule"/>
</dbReference>
<dbReference type="Gene3D" id="1.20.5.640">
    <property type="entry name" value="Single helix bin"/>
    <property type="match status" value="1"/>
</dbReference>
<dbReference type="HAMAP" id="MF_00340">
    <property type="entry name" value="Ribosomal_bL32"/>
    <property type="match status" value="1"/>
</dbReference>
<dbReference type="InterPro" id="IPR002677">
    <property type="entry name" value="Ribosomal_bL32"/>
</dbReference>
<dbReference type="InterPro" id="IPR044957">
    <property type="entry name" value="Ribosomal_bL32_bact"/>
</dbReference>
<dbReference type="InterPro" id="IPR011332">
    <property type="entry name" value="Ribosomal_zn-bd"/>
</dbReference>
<dbReference type="NCBIfam" id="TIGR01031">
    <property type="entry name" value="rpmF_bact"/>
    <property type="match status" value="1"/>
</dbReference>
<dbReference type="PANTHER" id="PTHR35534">
    <property type="entry name" value="50S RIBOSOMAL PROTEIN L32"/>
    <property type="match status" value="1"/>
</dbReference>
<dbReference type="PANTHER" id="PTHR35534:SF1">
    <property type="entry name" value="LARGE RIBOSOMAL SUBUNIT PROTEIN BL32"/>
    <property type="match status" value="1"/>
</dbReference>
<dbReference type="Pfam" id="PF01783">
    <property type="entry name" value="Ribosomal_L32p"/>
    <property type="match status" value="1"/>
</dbReference>
<dbReference type="SUPFAM" id="SSF57829">
    <property type="entry name" value="Zn-binding ribosomal proteins"/>
    <property type="match status" value="1"/>
</dbReference>
<gene>
    <name evidence="1" type="primary">rpmF</name>
    <name type="ordered locus">BSUIS_B1251</name>
</gene>
<name>RL32_BRUSI</name>
<sequence length="59" mass="6790">MAVPKRKTSPSRRGMRRSADALKAPTYVEDKNSGELRRPHHIDLKSGMYRGRQVLEPKE</sequence>
<feature type="chain" id="PRO_1000079322" description="Large ribosomal subunit protein bL32">
    <location>
        <begin position="1"/>
        <end position="59"/>
    </location>
</feature>
<feature type="region of interest" description="Disordered" evidence="2">
    <location>
        <begin position="1"/>
        <end position="59"/>
    </location>
</feature>
<feature type="compositionally biased region" description="Basic residues" evidence="2">
    <location>
        <begin position="1"/>
        <end position="16"/>
    </location>
</feature>
<feature type="compositionally biased region" description="Basic and acidic residues" evidence="2">
    <location>
        <begin position="28"/>
        <end position="44"/>
    </location>
</feature>
<evidence type="ECO:0000255" key="1">
    <source>
        <dbReference type="HAMAP-Rule" id="MF_00340"/>
    </source>
</evidence>
<evidence type="ECO:0000256" key="2">
    <source>
        <dbReference type="SAM" id="MobiDB-lite"/>
    </source>
</evidence>
<evidence type="ECO:0000305" key="3"/>
<proteinExistence type="inferred from homology"/>
<organism>
    <name type="scientific">Brucella suis (strain ATCC 23445 / NCTC 10510)</name>
    <dbReference type="NCBI Taxonomy" id="470137"/>
    <lineage>
        <taxon>Bacteria</taxon>
        <taxon>Pseudomonadati</taxon>
        <taxon>Pseudomonadota</taxon>
        <taxon>Alphaproteobacteria</taxon>
        <taxon>Hyphomicrobiales</taxon>
        <taxon>Brucellaceae</taxon>
        <taxon>Brucella/Ochrobactrum group</taxon>
        <taxon>Brucella</taxon>
    </lineage>
</organism>
<accession>A9WWP9</accession>
<protein>
    <recommendedName>
        <fullName evidence="1">Large ribosomal subunit protein bL32</fullName>
    </recommendedName>
    <alternativeName>
        <fullName evidence="3">50S ribosomal protein L32</fullName>
    </alternativeName>
</protein>
<comment type="similarity">
    <text evidence="1">Belongs to the bacterial ribosomal protein bL32 family.</text>
</comment>